<evidence type="ECO:0000255" key="1">
    <source>
        <dbReference type="HAMAP-Rule" id="MF_00169"/>
    </source>
</evidence>
<sequence length="151" mass="16470">MSSTILVIHGPNLNLLGKREPEVYGHLTLDNINQQLIAQAEQASITLDTFQSNWEGAIVDRIHQAQTEGVKLIIINPAALTHTSVALRDALLGVAIPFIEVHLSNVHAREAFRHHSYLSDKAIGVICGLGAKGYSFALDYAIEKIQPSNPN</sequence>
<name>AROQ_ACIBC</name>
<comment type="function">
    <text evidence="1">Catalyzes a trans-dehydration via an enolate intermediate.</text>
</comment>
<comment type="catalytic activity">
    <reaction evidence="1">
        <text>3-dehydroquinate = 3-dehydroshikimate + H2O</text>
        <dbReference type="Rhea" id="RHEA:21096"/>
        <dbReference type="ChEBI" id="CHEBI:15377"/>
        <dbReference type="ChEBI" id="CHEBI:16630"/>
        <dbReference type="ChEBI" id="CHEBI:32364"/>
        <dbReference type="EC" id="4.2.1.10"/>
    </reaction>
</comment>
<comment type="pathway">
    <text evidence="1">Metabolic intermediate biosynthesis; chorismate biosynthesis; chorismate from D-erythrose 4-phosphate and phosphoenolpyruvate: step 3/7.</text>
</comment>
<comment type="subunit">
    <text evidence="1">Homododecamer.</text>
</comment>
<comment type="similarity">
    <text evidence="1">Belongs to the type-II 3-dehydroquinase family.</text>
</comment>
<reference key="1">
    <citation type="journal article" date="2008" name="Antimicrob. Agents Chemother.">
        <title>Whole-genome pyrosequencing of an epidemic multidrug-resistant Acinetobacter baumannii strain belonging to the European clone II group.</title>
        <authorList>
            <person name="Iacono M."/>
            <person name="Villa L."/>
            <person name="Fortini D."/>
            <person name="Bordoni R."/>
            <person name="Imperi F."/>
            <person name="Bonnal R.J."/>
            <person name="Sicheritz-Ponten T."/>
            <person name="De Bellis G."/>
            <person name="Visca P."/>
            <person name="Cassone A."/>
            <person name="Carattoli A."/>
        </authorList>
    </citation>
    <scope>NUCLEOTIDE SEQUENCE [LARGE SCALE GENOMIC DNA]</scope>
    <source>
        <strain>ACICU</strain>
    </source>
</reference>
<accession>B2I3H4</accession>
<keyword id="KW-0028">Amino-acid biosynthesis</keyword>
<keyword id="KW-0057">Aromatic amino acid biosynthesis</keyword>
<keyword id="KW-0456">Lyase</keyword>
<protein>
    <recommendedName>
        <fullName evidence="1">3-dehydroquinate dehydratase</fullName>
        <shortName evidence="1">3-dehydroquinase</shortName>
        <ecNumber evidence="1">4.2.1.10</ecNumber>
    </recommendedName>
    <alternativeName>
        <fullName evidence="1">Type II DHQase</fullName>
    </alternativeName>
</protein>
<organism>
    <name type="scientific">Acinetobacter baumannii (strain ACICU)</name>
    <dbReference type="NCBI Taxonomy" id="405416"/>
    <lineage>
        <taxon>Bacteria</taxon>
        <taxon>Pseudomonadati</taxon>
        <taxon>Pseudomonadota</taxon>
        <taxon>Gammaproteobacteria</taxon>
        <taxon>Moraxellales</taxon>
        <taxon>Moraxellaceae</taxon>
        <taxon>Acinetobacter</taxon>
        <taxon>Acinetobacter calcoaceticus/baumannii complex</taxon>
    </lineage>
</organism>
<gene>
    <name evidence="1" type="primary">aroQ</name>
    <name type="ordered locus">ACICU_02135</name>
</gene>
<dbReference type="EC" id="4.2.1.10" evidence="1"/>
<dbReference type="EMBL" id="CP000863">
    <property type="protein sequence ID" value="ACC57447.1"/>
    <property type="molecule type" value="Genomic_DNA"/>
</dbReference>
<dbReference type="RefSeq" id="WP_000099412.1">
    <property type="nucleotide sequence ID" value="NZ_CP031380.1"/>
</dbReference>
<dbReference type="SMR" id="B2I3H4"/>
<dbReference type="GeneID" id="92894274"/>
<dbReference type="KEGG" id="abc:ACICU_02135"/>
<dbReference type="HOGENOM" id="CLU_090968_1_0_6"/>
<dbReference type="UniPathway" id="UPA00053">
    <property type="reaction ID" value="UER00086"/>
</dbReference>
<dbReference type="Proteomes" id="UP000008839">
    <property type="component" value="Chromosome"/>
</dbReference>
<dbReference type="GO" id="GO:0003855">
    <property type="term" value="F:3-dehydroquinate dehydratase activity"/>
    <property type="evidence" value="ECO:0007669"/>
    <property type="project" value="UniProtKB-UniRule"/>
</dbReference>
<dbReference type="GO" id="GO:0008652">
    <property type="term" value="P:amino acid biosynthetic process"/>
    <property type="evidence" value="ECO:0007669"/>
    <property type="project" value="UniProtKB-KW"/>
</dbReference>
<dbReference type="GO" id="GO:0009073">
    <property type="term" value="P:aromatic amino acid family biosynthetic process"/>
    <property type="evidence" value="ECO:0007669"/>
    <property type="project" value="UniProtKB-KW"/>
</dbReference>
<dbReference type="GO" id="GO:0009423">
    <property type="term" value="P:chorismate biosynthetic process"/>
    <property type="evidence" value="ECO:0007669"/>
    <property type="project" value="UniProtKB-UniRule"/>
</dbReference>
<dbReference type="GO" id="GO:0019631">
    <property type="term" value="P:quinate catabolic process"/>
    <property type="evidence" value="ECO:0007669"/>
    <property type="project" value="TreeGrafter"/>
</dbReference>
<dbReference type="CDD" id="cd00466">
    <property type="entry name" value="DHQase_II"/>
    <property type="match status" value="1"/>
</dbReference>
<dbReference type="Gene3D" id="3.40.50.9100">
    <property type="entry name" value="Dehydroquinase, class II"/>
    <property type="match status" value="1"/>
</dbReference>
<dbReference type="HAMAP" id="MF_00169">
    <property type="entry name" value="AroQ"/>
    <property type="match status" value="1"/>
</dbReference>
<dbReference type="InterPro" id="IPR001874">
    <property type="entry name" value="DHquinase_II"/>
</dbReference>
<dbReference type="InterPro" id="IPR018509">
    <property type="entry name" value="DHquinase_II_CS"/>
</dbReference>
<dbReference type="InterPro" id="IPR036441">
    <property type="entry name" value="DHquinase_II_sf"/>
</dbReference>
<dbReference type="NCBIfam" id="TIGR01088">
    <property type="entry name" value="aroQ"/>
    <property type="match status" value="1"/>
</dbReference>
<dbReference type="NCBIfam" id="NF003804">
    <property type="entry name" value="PRK05395.1-1"/>
    <property type="match status" value="1"/>
</dbReference>
<dbReference type="NCBIfam" id="NF003805">
    <property type="entry name" value="PRK05395.1-2"/>
    <property type="match status" value="1"/>
</dbReference>
<dbReference type="NCBIfam" id="NF003806">
    <property type="entry name" value="PRK05395.1-3"/>
    <property type="match status" value="1"/>
</dbReference>
<dbReference type="NCBIfam" id="NF003807">
    <property type="entry name" value="PRK05395.1-4"/>
    <property type="match status" value="1"/>
</dbReference>
<dbReference type="PANTHER" id="PTHR21272">
    <property type="entry name" value="CATABOLIC 3-DEHYDROQUINASE"/>
    <property type="match status" value="1"/>
</dbReference>
<dbReference type="PANTHER" id="PTHR21272:SF3">
    <property type="entry name" value="CATABOLIC 3-DEHYDROQUINASE"/>
    <property type="match status" value="1"/>
</dbReference>
<dbReference type="Pfam" id="PF01220">
    <property type="entry name" value="DHquinase_II"/>
    <property type="match status" value="1"/>
</dbReference>
<dbReference type="PIRSF" id="PIRSF001399">
    <property type="entry name" value="DHquinase_II"/>
    <property type="match status" value="1"/>
</dbReference>
<dbReference type="SUPFAM" id="SSF52304">
    <property type="entry name" value="Type II 3-dehydroquinate dehydratase"/>
    <property type="match status" value="1"/>
</dbReference>
<dbReference type="PROSITE" id="PS01029">
    <property type="entry name" value="DEHYDROQUINASE_II"/>
    <property type="match status" value="1"/>
</dbReference>
<feature type="chain" id="PRO_1000097585" description="3-dehydroquinate dehydratase">
    <location>
        <begin position="1"/>
        <end position="151"/>
    </location>
</feature>
<feature type="active site" description="Proton acceptor" evidence="1">
    <location>
        <position position="24"/>
    </location>
</feature>
<feature type="active site" description="Proton donor" evidence="1">
    <location>
        <position position="102"/>
    </location>
</feature>
<feature type="binding site" evidence="1">
    <location>
        <position position="76"/>
    </location>
    <ligand>
        <name>substrate</name>
    </ligand>
</feature>
<feature type="binding site" evidence="1">
    <location>
        <position position="82"/>
    </location>
    <ligand>
        <name>substrate</name>
    </ligand>
</feature>
<feature type="binding site" evidence="1">
    <location>
        <position position="89"/>
    </location>
    <ligand>
        <name>substrate</name>
    </ligand>
</feature>
<feature type="binding site" evidence="1">
    <location>
        <begin position="103"/>
        <end position="104"/>
    </location>
    <ligand>
        <name>substrate</name>
    </ligand>
</feature>
<feature type="binding site" evidence="1">
    <location>
        <position position="113"/>
    </location>
    <ligand>
        <name>substrate</name>
    </ligand>
</feature>
<feature type="site" description="Transition state stabilizer" evidence="1">
    <location>
        <position position="19"/>
    </location>
</feature>
<proteinExistence type="inferred from homology"/>